<comment type="function">
    <text evidence="1">Catalyzes the reduction of the glycolytic intermediate dihydroxyacetone phosphate (DHAP) to sn-glycerol 3-phosphate (G3P), the key precursor for phospholipid synthesis.</text>
</comment>
<comment type="catalytic activity">
    <reaction evidence="1">
        <text>sn-glycerol 3-phosphate + NAD(+) = dihydroxyacetone phosphate + NADH + H(+)</text>
        <dbReference type="Rhea" id="RHEA:11092"/>
        <dbReference type="ChEBI" id="CHEBI:15378"/>
        <dbReference type="ChEBI" id="CHEBI:57540"/>
        <dbReference type="ChEBI" id="CHEBI:57597"/>
        <dbReference type="ChEBI" id="CHEBI:57642"/>
        <dbReference type="ChEBI" id="CHEBI:57945"/>
        <dbReference type="EC" id="1.1.1.94"/>
    </reaction>
    <physiologicalReaction direction="right-to-left" evidence="1">
        <dbReference type="Rhea" id="RHEA:11094"/>
    </physiologicalReaction>
</comment>
<comment type="catalytic activity">
    <reaction evidence="1">
        <text>sn-glycerol 3-phosphate + NADP(+) = dihydroxyacetone phosphate + NADPH + H(+)</text>
        <dbReference type="Rhea" id="RHEA:11096"/>
        <dbReference type="ChEBI" id="CHEBI:15378"/>
        <dbReference type="ChEBI" id="CHEBI:57597"/>
        <dbReference type="ChEBI" id="CHEBI:57642"/>
        <dbReference type="ChEBI" id="CHEBI:57783"/>
        <dbReference type="ChEBI" id="CHEBI:58349"/>
        <dbReference type="EC" id="1.1.1.94"/>
    </reaction>
    <physiologicalReaction direction="right-to-left" evidence="1">
        <dbReference type="Rhea" id="RHEA:11098"/>
    </physiologicalReaction>
</comment>
<comment type="pathway">
    <text evidence="1">Membrane lipid metabolism; glycerophospholipid metabolism.</text>
</comment>
<comment type="subcellular location">
    <subcellularLocation>
        <location evidence="1">Cytoplasm</location>
    </subcellularLocation>
</comment>
<comment type="similarity">
    <text evidence="1">Belongs to the NAD-dependent glycerol-3-phosphate dehydrogenase family.</text>
</comment>
<accession>Q93FD0</accession>
<accession>Q1GB40</accession>
<protein>
    <recommendedName>
        <fullName evidence="1">Glycerol-3-phosphate dehydrogenase [NAD(P)+] 1</fullName>
        <ecNumber evidence="1">1.1.1.94</ecNumber>
    </recommendedName>
    <alternativeName>
        <fullName evidence="1">NAD(P)(+)-dependent glycerol-3-phosphate dehydrogenase 1</fullName>
    </alternativeName>
    <alternativeName>
        <fullName evidence="1">NAD(P)H-dependent dihydroxyacetone-phosphate reductase 1</fullName>
    </alternativeName>
</protein>
<keyword id="KW-0963">Cytoplasm</keyword>
<keyword id="KW-0444">Lipid biosynthesis</keyword>
<keyword id="KW-0443">Lipid metabolism</keyword>
<keyword id="KW-0520">NAD</keyword>
<keyword id="KW-0521">NADP</keyword>
<keyword id="KW-0547">Nucleotide-binding</keyword>
<keyword id="KW-0560">Oxidoreductase</keyword>
<keyword id="KW-0594">Phospholipid biosynthesis</keyword>
<keyword id="KW-1208">Phospholipid metabolism</keyword>
<keyword id="KW-1185">Reference proteome</keyword>
<dbReference type="EC" id="1.1.1.94" evidence="1"/>
<dbReference type="EMBL" id="AF320250">
    <property type="protein sequence ID" value="AAL14786.1"/>
    <property type="molecule type" value="Genomic_DNA"/>
</dbReference>
<dbReference type="EMBL" id="CR954253">
    <property type="protein sequence ID" value="CAI97442.1"/>
    <property type="molecule type" value="Genomic_DNA"/>
</dbReference>
<dbReference type="RefSeq" id="WP_003622691.1">
    <property type="nucleotide sequence ID" value="NZ_JQAV01000001.1"/>
</dbReference>
<dbReference type="SMR" id="Q93FD0"/>
<dbReference type="STRING" id="390333.Ldb0612"/>
<dbReference type="KEGG" id="ldb:Ldb0612"/>
<dbReference type="PATRIC" id="fig|390333.13.peg.185"/>
<dbReference type="eggNOG" id="COG0240">
    <property type="taxonomic scope" value="Bacteria"/>
</dbReference>
<dbReference type="HOGENOM" id="CLU_033449_0_2_9"/>
<dbReference type="BioCyc" id="LDEL390333:LDB_RS02650-MONOMER"/>
<dbReference type="UniPathway" id="UPA00940"/>
<dbReference type="Proteomes" id="UP000001259">
    <property type="component" value="Chromosome"/>
</dbReference>
<dbReference type="GO" id="GO:0005829">
    <property type="term" value="C:cytosol"/>
    <property type="evidence" value="ECO:0007669"/>
    <property type="project" value="TreeGrafter"/>
</dbReference>
<dbReference type="GO" id="GO:0047952">
    <property type="term" value="F:glycerol-3-phosphate dehydrogenase [NAD(P)+] activity"/>
    <property type="evidence" value="ECO:0007669"/>
    <property type="project" value="UniProtKB-UniRule"/>
</dbReference>
<dbReference type="GO" id="GO:0051287">
    <property type="term" value="F:NAD binding"/>
    <property type="evidence" value="ECO:0007669"/>
    <property type="project" value="InterPro"/>
</dbReference>
<dbReference type="GO" id="GO:0005975">
    <property type="term" value="P:carbohydrate metabolic process"/>
    <property type="evidence" value="ECO:0007669"/>
    <property type="project" value="InterPro"/>
</dbReference>
<dbReference type="GO" id="GO:0046167">
    <property type="term" value="P:glycerol-3-phosphate biosynthetic process"/>
    <property type="evidence" value="ECO:0007669"/>
    <property type="project" value="UniProtKB-UniRule"/>
</dbReference>
<dbReference type="GO" id="GO:0046168">
    <property type="term" value="P:glycerol-3-phosphate catabolic process"/>
    <property type="evidence" value="ECO:0007669"/>
    <property type="project" value="InterPro"/>
</dbReference>
<dbReference type="GO" id="GO:0006650">
    <property type="term" value="P:glycerophospholipid metabolic process"/>
    <property type="evidence" value="ECO:0007669"/>
    <property type="project" value="UniProtKB-UniRule"/>
</dbReference>
<dbReference type="GO" id="GO:0008654">
    <property type="term" value="P:phospholipid biosynthetic process"/>
    <property type="evidence" value="ECO:0007669"/>
    <property type="project" value="UniProtKB-KW"/>
</dbReference>
<dbReference type="FunFam" id="1.10.1040.10:FF:000001">
    <property type="entry name" value="Glycerol-3-phosphate dehydrogenase [NAD(P)+]"/>
    <property type="match status" value="1"/>
</dbReference>
<dbReference type="FunFam" id="3.40.50.720:FF:000019">
    <property type="entry name" value="Glycerol-3-phosphate dehydrogenase [NAD(P)+]"/>
    <property type="match status" value="1"/>
</dbReference>
<dbReference type="Gene3D" id="1.10.1040.10">
    <property type="entry name" value="N-(1-d-carboxylethyl)-l-norvaline Dehydrogenase, domain 2"/>
    <property type="match status" value="1"/>
</dbReference>
<dbReference type="Gene3D" id="3.40.50.720">
    <property type="entry name" value="NAD(P)-binding Rossmann-like Domain"/>
    <property type="match status" value="1"/>
</dbReference>
<dbReference type="HAMAP" id="MF_00394">
    <property type="entry name" value="NAD_Glyc3P_dehydrog"/>
    <property type="match status" value="1"/>
</dbReference>
<dbReference type="InterPro" id="IPR008927">
    <property type="entry name" value="6-PGluconate_DH-like_C_sf"/>
</dbReference>
<dbReference type="InterPro" id="IPR013328">
    <property type="entry name" value="6PGD_dom2"/>
</dbReference>
<dbReference type="InterPro" id="IPR006168">
    <property type="entry name" value="G3P_DH_NAD-dep"/>
</dbReference>
<dbReference type="InterPro" id="IPR006109">
    <property type="entry name" value="G3P_DH_NAD-dep_C"/>
</dbReference>
<dbReference type="InterPro" id="IPR011128">
    <property type="entry name" value="G3P_DH_NAD-dep_N"/>
</dbReference>
<dbReference type="InterPro" id="IPR036291">
    <property type="entry name" value="NAD(P)-bd_dom_sf"/>
</dbReference>
<dbReference type="NCBIfam" id="NF000940">
    <property type="entry name" value="PRK00094.1-2"/>
    <property type="match status" value="1"/>
</dbReference>
<dbReference type="NCBIfam" id="NF000941">
    <property type="entry name" value="PRK00094.1-3"/>
    <property type="match status" value="1"/>
</dbReference>
<dbReference type="NCBIfam" id="NF000942">
    <property type="entry name" value="PRK00094.1-4"/>
    <property type="match status" value="1"/>
</dbReference>
<dbReference type="PANTHER" id="PTHR11728">
    <property type="entry name" value="GLYCEROL-3-PHOSPHATE DEHYDROGENASE"/>
    <property type="match status" value="1"/>
</dbReference>
<dbReference type="PANTHER" id="PTHR11728:SF1">
    <property type="entry name" value="GLYCEROL-3-PHOSPHATE DEHYDROGENASE [NAD(+)] 2, CHLOROPLASTIC"/>
    <property type="match status" value="1"/>
</dbReference>
<dbReference type="Pfam" id="PF07479">
    <property type="entry name" value="NAD_Gly3P_dh_C"/>
    <property type="match status" value="1"/>
</dbReference>
<dbReference type="Pfam" id="PF01210">
    <property type="entry name" value="NAD_Gly3P_dh_N"/>
    <property type="match status" value="1"/>
</dbReference>
<dbReference type="PIRSF" id="PIRSF000114">
    <property type="entry name" value="Glycerol-3-P_dh"/>
    <property type="match status" value="1"/>
</dbReference>
<dbReference type="PRINTS" id="PR00077">
    <property type="entry name" value="GPDHDRGNASE"/>
</dbReference>
<dbReference type="SUPFAM" id="SSF48179">
    <property type="entry name" value="6-phosphogluconate dehydrogenase C-terminal domain-like"/>
    <property type="match status" value="1"/>
</dbReference>
<dbReference type="SUPFAM" id="SSF51735">
    <property type="entry name" value="NAD(P)-binding Rossmann-fold domains"/>
    <property type="match status" value="1"/>
</dbReference>
<dbReference type="PROSITE" id="PS00957">
    <property type="entry name" value="NAD_G3PDH"/>
    <property type="match status" value="1"/>
</dbReference>
<proteinExistence type="inferred from homology"/>
<feature type="chain" id="PRO_0000137974" description="Glycerol-3-phosphate dehydrogenase [NAD(P)+] 1">
    <location>
        <begin position="1"/>
        <end position="338"/>
    </location>
</feature>
<feature type="active site" description="Proton acceptor" evidence="1">
    <location>
        <position position="195"/>
    </location>
</feature>
<feature type="binding site" evidence="1">
    <location>
        <position position="11"/>
    </location>
    <ligand>
        <name>NADPH</name>
        <dbReference type="ChEBI" id="CHEBI:57783"/>
    </ligand>
</feature>
<feature type="binding site" evidence="1">
    <location>
        <position position="12"/>
    </location>
    <ligand>
        <name>NADPH</name>
        <dbReference type="ChEBI" id="CHEBI:57783"/>
    </ligand>
</feature>
<feature type="binding site" evidence="1">
    <location>
        <position position="32"/>
    </location>
    <ligand>
        <name>NADPH</name>
        <dbReference type="ChEBI" id="CHEBI:57783"/>
    </ligand>
</feature>
<feature type="binding site" evidence="1">
    <location>
        <position position="33"/>
    </location>
    <ligand>
        <name>NADPH</name>
        <dbReference type="ChEBI" id="CHEBI:57783"/>
    </ligand>
</feature>
<feature type="binding site" evidence="1">
    <location>
        <position position="109"/>
    </location>
    <ligand>
        <name>NADPH</name>
        <dbReference type="ChEBI" id="CHEBI:57783"/>
    </ligand>
</feature>
<feature type="binding site" evidence="1">
    <location>
        <position position="109"/>
    </location>
    <ligand>
        <name>sn-glycerol 3-phosphate</name>
        <dbReference type="ChEBI" id="CHEBI:57597"/>
    </ligand>
</feature>
<feature type="binding site" evidence="1">
    <location>
        <position position="140"/>
    </location>
    <ligand>
        <name>sn-glycerol 3-phosphate</name>
        <dbReference type="ChEBI" id="CHEBI:57597"/>
    </ligand>
</feature>
<feature type="binding site" evidence="1">
    <location>
        <position position="142"/>
    </location>
    <ligand>
        <name>sn-glycerol 3-phosphate</name>
        <dbReference type="ChEBI" id="CHEBI:57597"/>
    </ligand>
</feature>
<feature type="binding site" evidence="1">
    <location>
        <position position="144"/>
    </location>
    <ligand>
        <name>NADPH</name>
        <dbReference type="ChEBI" id="CHEBI:57783"/>
    </ligand>
</feature>
<feature type="binding site" evidence="1">
    <location>
        <position position="195"/>
    </location>
    <ligand>
        <name>sn-glycerol 3-phosphate</name>
        <dbReference type="ChEBI" id="CHEBI:57597"/>
    </ligand>
</feature>
<feature type="binding site" evidence="1">
    <location>
        <position position="248"/>
    </location>
    <ligand>
        <name>sn-glycerol 3-phosphate</name>
        <dbReference type="ChEBI" id="CHEBI:57597"/>
    </ligand>
</feature>
<feature type="binding site" evidence="1">
    <location>
        <position position="258"/>
    </location>
    <ligand>
        <name>sn-glycerol 3-phosphate</name>
        <dbReference type="ChEBI" id="CHEBI:57597"/>
    </ligand>
</feature>
<feature type="binding site" evidence="1">
    <location>
        <position position="259"/>
    </location>
    <ligand>
        <name>NADPH</name>
        <dbReference type="ChEBI" id="CHEBI:57783"/>
    </ligand>
</feature>
<feature type="binding site" evidence="1">
    <location>
        <position position="259"/>
    </location>
    <ligand>
        <name>sn-glycerol 3-phosphate</name>
        <dbReference type="ChEBI" id="CHEBI:57597"/>
    </ligand>
</feature>
<feature type="binding site" evidence="1">
    <location>
        <position position="260"/>
    </location>
    <ligand>
        <name>sn-glycerol 3-phosphate</name>
        <dbReference type="ChEBI" id="CHEBI:57597"/>
    </ligand>
</feature>
<feature type="binding site" evidence="1">
    <location>
        <position position="283"/>
    </location>
    <ligand>
        <name>NADPH</name>
        <dbReference type="ChEBI" id="CHEBI:57783"/>
    </ligand>
</feature>
<feature type="binding site" evidence="1">
    <location>
        <position position="285"/>
    </location>
    <ligand>
        <name>NADPH</name>
        <dbReference type="ChEBI" id="CHEBI:57783"/>
    </ligand>
</feature>
<organism>
    <name type="scientific">Lactobacillus delbrueckii subsp. bulgaricus (strain ATCC 11842 / DSM 20081 / BCRC 10696 / JCM 1002 / NBRC 13953 / NCIMB 11778 / NCTC 12712 / WDCM 00102 / Lb 14)</name>
    <dbReference type="NCBI Taxonomy" id="390333"/>
    <lineage>
        <taxon>Bacteria</taxon>
        <taxon>Bacillati</taxon>
        <taxon>Bacillota</taxon>
        <taxon>Bacilli</taxon>
        <taxon>Lactobacillales</taxon>
        <taxon>Lactobacillaceae</taxon>
        <taxon>Lactobacillus</taxon>
    </lineage>
</organism>
<evidence type="ECO:0000255" key="1">
    <source>
        <dbReference type="HAMAP-Rule" id="MF_00394"/>
    </source>
</evidence>
<reference key="1">
    <citation type="submission" date="2000-11" db="EMBL/GenBank/DDBJ databases">
        <title>L. bulgaricus ymdA-uvrA region.</title>
        <authorList>
            <person name="van de Guchte M."/>
            <person name="Dervyn R."/>
            <person name="Ehrlich S.D."/>
            <person name="Maguin E."/>
        </authorList>
    </citation>
    <scope>NUCLEOTIDE SEQUENCE [GENOMIC DNA]</scope>
</reference>
<reference key="2">
    <citation type="journal article" date="2006" name="Proc. Natl. Acad. Sci. U.S.A.">
        <title>The complete genome sequence of Lactobacillus bulgaricus reveals extensive and ongoing reductive evolution.</title>
        <authorList>
            <person name="van de Guchte M."/>
            <person name="Penaud S."/>
            <person name="Grimaldi C."/>
            <person name="Barbe V."/>
            <person name="Bryson K."/>
            <person name="Nicolas P."/>
            <person name="Robert C."/>
            <person name="Oztas S."/>
            <person name="Mangenot S."/>
            <person name="Couloux A."/>
            <person name="Loux V."/>
            <person name="Dervyn R."/>
            <person name="Bossy R."/>
            <person name="Bolotin A."/>
            <person name="Batto J.-M."/>
            <person name="Walunas T."/>
            <person name="Gibrat J.-F."/>
            <person name="Bessieres P."/>
            <person name="Weissenbach J."/>
            <person name="Ehrlich S.D."/>
            <person name="Maguin E."/>
        </authorList>
    </citation>
    <scope>NUCLEOTIDE SEQUENCE [LARGE SCALE GENOMIC DNA]</scope>
    <source>
        <strain>ATCC 11842 / DSM 20081 / BCRC 10696 / JCM 1002 / NBRC 13953 / NCIMB 11778 / NCTC 12712 / WDCM 00102 / Lb 14</strain>
    </source>
</reference>
<gene>
    <name evidence="1" type="primary">gpsA1</name>
    <name type="synonym">gpsA</name>
    <name type="ordered locus">Ldb0612</name>
</gene>
<sequence>MTKISALGAGSWGSVLASMLADNGHEVALYAHRQVIADEINQDHTNLHYMKDWTLNPSVWASTDMGQVLKDCDVILFAVPTSAIRSVAKAVRQVLDENGRQPYLVSATKGIESGTKKLVLQIFKDEIYPDGFDKMIVLSGPSHAENTAQKDLTAITLASTSLDNAAKMQKIFSNDYVRFYTSNDPIGVQVGGAVKNVIAIAAGILAGLGYGDNAKAALMTRGLAEITRLGVAFGGQPWTFSGLSGIGDLIVTCTSVNSRNWRCGYQLGQGKPLDEVLANMGQVVEGATTVKAVYEICDKYSLDMPISASIYKVLYEGAKIDDEIKLMMSRQLGPEIRI</sequence>
<name>GPDA1_LACDA</name>